<organism>
    <name type="scientific">Paraburkholderia xenovorans (strain LB400)</name>
    <dbReference type="NCBI Taxonomy" id="266265"/>
    <lineage>
        <taxon>Bacteria</taxon>
        <taxon>Pseudomonadati</taxon>
        <taxon>Pseudomonadota</taxon>
        <taxon>Betaproteobacteria</taxon>
        <taxon>Burkholderiales</taxon>
        <taxon>Burkholderiaceae</taxon>
        <taxon>Paraburkholderia</taxon>
    </lineage>
</organism>
<dbReference type="EMBL" id="CP000270">
    <property type="protein sequence ID" value="ABE32888.1"/>
    <property type="molecule type" value="Genomic_DNA"/>
</dbReference>
<dbReference type="RefSeq" id="WP_011490290.1">
    <property type="nucleotide sequence ID" value="NZ_CP008760.1"/>
</dbReference>
<dbReference type="SMR" id="Q13SQ1"/>
<dbReference type="STRING" id="266265.Bxe_A0039"/>
<dbReference type="KEGG" id="bxb:DR64_2218"/>
<dbReference type="KEGG" id="bxe:Bxe_A0039"/>
<dbReference type="eggNOG" id="COG0224">
    <property type="taxonomic scope" value="Bacteria"/>
</dbReference>
<dbReference type="OrthoDB" id="9812769at2"/>
<dbReference type="Proteomes" id="UP000001817">
    <property type="component" value="Chromosome 1"/>
</dbReference>
<dbReference type="GO" id="GO:0005886">
    <property type="term" value="C:plasma membrane"/>
    <property type="evidence" value="ECO:0007669"/>
    <property type="project" value="UniProtKB-SubCell"/>
</dbReference>
<dbReference type="GO" id="GO:0045259">
    <property type="term" value="C:proton-transporting ATP synthase complex"/>
    <property type="evidence" value="ECO:0007669"/>
    <property type="project" value="UniProtKB-KW"/>
</dbReference>
<dbReference type="GO" id="GO:0005524">
    <property type="term" value="F:ATP binding"/>
    <property type="evidence" value="ECO:0007669"/>
    <property type="project" value="UniProtKB-UniRule"/>
</dbReference>
<dbReference type="GO" id="GO:0046933">
    <property type="term" value="F:proton-transporting ATP synthase activity, rotational mechanism"/>
    <property type="evidence" value="ECO:0007669"/>
    <property type="project" value="UniProtKB-UniRule"/>
</dbReference>
<dbReference type="GO" id="GO:0042777">
    <property type="term" value="P:proton motive force-driven plasma membrane ATP synthesis"/>
    <property type="evidence" value="ECO:0007669"/>
    <property type="project" value="UniProtKB-UniRule"/>
</dbReference>
<dbReference type="CDD" id="cd12151">
    <property type="entry name" value="F1-ATPase_gamma"/>
    <property type="match status" value="1"/>
</dbReference>
<dbReference type="FunFam" id="1.10.287.80:FF:000005">
    <property type="entry name" value="ATP synthase gamma chain"/>
    <property type="match status" value="1"/>
</dbReference>
<dbReference type="Gene3D" id="3.40.1380.10">
    <property type="match status" value="1"/>
</dbReference>
<dbReference type="Gene3D" id="1.10.287.80">
    <property type="entry name" value="ATP synthase, gamma subunit, helix hairpin domain"/>
    <property type="match status" value="1"/>
</dbReference>
<dbReference type="HAMAP" id="MF_00815">
    <property type="entry name" value="ATP_synth_gamma_bact"/>
    <property type="match status" value="1"/>
</dbReference>
<dbReference type="InterPro" id="IPR035968">
    <property type="entry name" value="ATP_synth_F1_ATPase_gsu"/>
</dbReference>
<dbReference type="InterPro" id="IPR000131">
    <property type="entry name" value="ATP_synth_F1_gsu"/>
</dbReference>
<dbReference type="InterPro" id="IPR023632">
    <property type="entry name" value="ATP_synth_F1_gsu_CS"/>
</dbReference>
<dbReference type="NCBIfam" id="TIGR01146">
    <property type="entry name" value="ATPsyn_F1gamma"/>
    <property type="match status" value="1"/>
</dbReference>
<dbReference type="NCBIfam" id="NF004144">
    <property type="entry name" value="PRK05621.1-1"/>
    <property type="match status" value="1"/>
</dbReference>
<dbReference type="PANTHER" id="PTHR11693">
    <property type="entry name" value="ATP SYNTHASE GAMMA CHAIN"/>
    <property type="match status" value="1"/>
</dbReference>
<dbReference type="PANTHER" id="PTHR11693:SF22">
    <property type="entry name" value="ATP SYNTHASE SUBUNIT GAMMA, MITOCHONDRIAL"/>
    <property type="match status" value="1"/>
</dbReference>
<dbReference type="Pfam" id="PF00231">
    <property type="entry name" value="ATP-synt"/>
    <property type="match status" value="1"/>
</dbReference>
<dbReference type="PRINTS" id="PR00126">
    <property type="entry name" value="ATPASEGAMMA"/>
</dbReference>
<dbReference type="SUPFAM" id="SSF52943">
    <property type="entry name" value="ATP synthase (F1-ATPase), gamma subunit"/>
    <property type="match status" value="1"/>
</dbReference>
<dbReference type="PROSITE" id="PS00153">
    <property type="entry name" value="ATPASE_GAMMA"/>
    <property type="match status" value="1"/>
</dbReference>
<keyword id="KW-0066">ATP synthesis</keyword>
<keyword id="KW-0997">Cell inner membrane</keyword>
<keyword id="KW-1003">Cell membrane</keyword>
<keyword id="KW-0139">CF(1)</keyword>
<keyword id="KW-0375">Hydrogen ion transport</keyword>
<keyword id="KW-0406">Ion transport</keyword>
<keyword id="KW-0472">Membrane</keyword>
<keyword id="KW-1185">Reference proteome</keyword>
<keyword id="KW-0813">Transport</keyword>
<accession>Q13SQ1</accession>
<comment type="function">
    <text evidence="1">Produces ATP from ADP in the presence of a proton gradient across the membrane. The gamma chain is believed to be important in regulating ATPase activity and the flow of protons through the CF(0) complex.</text>
</comment>
<comment type="subunit">
    <text evidence="1">F-type ATPases have 2 components, CF(1) - the catalytic core - and CF(0) - the membrane proton channel. CF(1) has five subunits: alpha(3), beta(3), gamma(1), delta(1), epsilon(1). CF(0) has three main subunits: a, b and c.</text>
</comment>
<comment type="subcellular location">
    <subcellularLocation>
        <location evidence="1">Cell inner membrane</location>
        <topology evidence="1">Peripheral membrane protein</topology>
    </subcellularLocation>
</comment>
<comment type="similarity">
    <text evidence="1">Belongs to the ATPase gamma chain family.</text>
</comment>
<sequence>MAGMKEIRGKIKSVQNTRKITKAMEMVAASKMRRAQERMRAARPYADKVRDIAAHMSRANPEYRHPFMVSNEGAKTAGIILVTTDKGLCGGMNTNVLRASLQKFKELEGQGKTIEATAIGTKGLGFLNRLRAKVVSNVVHLGDTPHLEKLIGAVKVQLDLYSEGKVSAVYLAYTRFVNTMKQEPVIEQLLPLSADQFERKEEDGTTPSTQWDYIYEPDAQAVVDELLVRYVEALVYQAVAENMASEQSARMVAMKAASDNAKTVINELQLVYNKSRQAAITKELSEIVGGAAAV</sequence>
<gene>
    <name evidence="1" type="primary">atpG</name>
    <name type="ordered locus">Bxeno_A4350</name>
    <name type="ORF">Bxe_A0039</name>
</gene>
<proteinExistence type="inferred from homology"/>
<evidence type="ECO:0000255" key="1">
    <source>
        <dbReference type="HAMAP-Rule" id="MF_00815"/>
    </source>
</evidence>
<reference key="1">
    <citation type="journal article" date="2006" name="Proc. Natl. Acad. Sci. U.S.A.">
        <title>Burkholderia xenovorans LB400 harbors a multi-replicon, 9.73-Mbp genome shaped for versatility.</title>
        <authorList>
            <person name="Chain P.S.G."/>
            <person name="Denef V.J."/>
            <person name="Konstantinidis K.T."/>
            <person name="Vergez L.M."/>
            <person name="Agullo L."/>
            <person name="Reyes V.L."/>
            <person name="Hauser L."/>
            <person name="Cordova M."/>
            <person name="Gomez L."/>
            <person name="Gonzalez M."/>
            <person name="Land M."/>
            <person name="Lao V."/>
            <person name="Larimer F."/>
            <person name="LiPuma J.J."/>
            <person name="Mahenthiralingam E."/>
            <person name="Malfatti S.A."/>
            <person name="Marx C.J."/>
            <person name="Parnell J.J."/>
            <person name="Ramette A."/>
            <person name="Richardson P."/>
            <person name="Seeger M."/>
            <person name="Smith D."/>
            <person name="Spilker T."/>
            <person name="Sul W.J."/>
            <person name="Tsoi T.V."/>
            <person name="Ulrich L.E."/>
            <person name="Zhulin I.B."/>
            <person name="Tiedje J.M."/>
        </authorList>
    </citation>
    <scope>NUCLEOTIDE SEQUENCE [LARGE SCALE GENOMIC DNA]</scope>
    <source>
        <strain>LB400</strain>
    </source>
</reference>
<feature type="chain" id="PRO_1000053177" description="ATP synthase gamma chain">
    <location>
        <begin position="1"/>
        <end position="294"/>
    </location>
</feature>
<name>ATPG_PARXL</name>
<protein>
    <recommendedName>
        <fullName evidence="1">ATP synthase gamma chain</fullName>
    </recommendedName>
    <alternativeName>
        <fullName evidence="1">ATP synthase F1 sector gamma subunit</fullName>
    </alternativeName>
    <alternativeName>
        <fullName evidence="1">F-ATPase gamma subunit</fullName>
    </alternativeName>
</protein>